<accession>B0FXI0</accession>
<gene>
    <name evidence="3" type="primary">iacA</name>
    <name evidence="5" type="ORF">E6B08_12580</name>
</gene>
<organism>
    <name type="scientific">Pseudomonas putida</name>
    <name type="common">Arthrobacter siderocapsulatus</name>
    <dbReference type="NCBI Taxonomy" id="303"/>
    <lineage>
        <taxon>Bacteria</taxon>
        <taxon>Pseudomonadati</taxon>
        <taxon>Pseudomonadota</taxon>
        <taxon>Gammaproteobacteria</taxon>
        <taxon>Pseudomonadales</taxon>
        <taxon>Pseudomonadaceae</taxon>
        <taxon>Pseudomonas</taxon>
    </lineage>
</organism>
<name>IACA_PSEPU</name>
<sequence>MDSLCLRAAPASALASGPAFEALLDGVRDRARLGEFDRQRHISRDVIDAFKAHGVYRALVPKRFGGLECSPAAFCEMIERISHADGSAGWVASFGMSPVYLAALPLETIAEIYGNSPDTVFAGGIFPPQAAEIVSGGFKINGRWKYSSGSMGADIVGVGIAPRNGDKLDLPRLAVLPRSQARIEETWDTVGLLGTGSHDLVVEDVVVGEQWTFVRGGKPNLDEPFFRYPSLSFATQVLSVVGLGIARAALDELSGMASGRISVTGAPALADRPLAQVDVAKAEAALRSARAFFYESIERAWEHVLAGDPVPVDVTNLLRLSSTHAARVAAEVARSAQMLSGMTGIYNESPLARCVNDAQVVTQHAFMGDVTYQNAGAMFFGKQPLPGYL</sequence>
<comment type="function">
    <text evidence="1 2">Involved in the degradation of the plant hormone indole-3-acetic acid (IAA) (PubMed:18205812, PubMed:23881445). Catalyzes the first step of the pathway, the conversion of IAA to 2-hydroxy-IAA (2-OH-IAA) (PubMed:23881445). Can also convert indole to indoxyl, which spontaneously dimerizes in the presence of oxygen to form the blue pigment indigo (PubMed:23881445).</text>
</comment>
<comment type="catalytic activity">
    <reaction evidence="2">
        <text>(indol-3-yl)acetate + NADH + O2 + H(+) = 2-hydroxy-(1H-indol-3-yl)acetate + NAD(+) + H2O</text>
        <dbReference type="Rhea" id="RHEA:41211"/>
        <dbReference type="ChEBI" id="CHEBI:15377"/>
        <dbReference type="ChEBI" id="CHEBI:15378"/>
        <dbReference type="ChEBI" id="CHEBI:15379"/>
        <dbReference type="ChEBI" id="CHEBI:30854"/>
        <dbReference type="ChEBI" id="CHEBI:57540"/>
        <dbReference type="ChEBI" id="CHEBI:57945"/>
        <dbReference type="ChEBI" id="CHEBI:136436"/>
        <dbReference type="EC" id="1.14.13.235"/>
    </reaction>
    <physiologicalReaction direction="left-to-right" evidence="2">
        <dbReference type="Rhea" id="RHEA:41212"/>
    </physiologicalReaction>
</comment>
<comment type="catalytic activity">
    <reaction evidence="2">
        <text>indole + NADH + O2 + H(+) = indoxyl + NAD(+) + H2O</text>
        <dbReference type="Rhea" id="RHEA:52836"/>
        <dbReference type="ChEBI" id="CHEBI:15377"/>
        <dbReference type="ChEBI" id="CHEBI:15378"/>
        <dbReference type="ChEBI" id="CHEBI:15379"/>
        <dbReference type="ChEBI" id="CHEBI:16881"/>
        <dbReference type="ChEBI" id="CHEBI:17840"/>
        <dbReference type="ChEBI" id="CHEBI:57540"/>
        <dbReference type="ChEBI" id="CHEBI:57945"/>
    </reaction>
    <physiologicalReaction direction="left-to-right" evidence="2">
        <dbReference type="Rhea" id="RHEA:52837"/>
    </physiologicalReaction>
</comment>
<comment type="induction">
    <text evidence="2">Induced in the presence of IAA. Expression is probably repressed by IacR and exposure to IAA relieves this repression.</text>
</comment>
<comment type="miscellaneous">
    <text evidence="2">Transformation of P.putida KT2440, which cannot degrade IAA, with the iac gene cluster confers the ability to grow on IAA as a sole source of carbon and energy, but not the ability to chemotaxis towards IAA.</text>
</comment>
<comment type="similarity">
    <text evidence="4">Belongs to the HpaH/HsaA monooxygenase family.</text>
</comment>
<evidence type="ECO:0000269" key="1">
    <source>
    </source>
</evidence>
<evidence type="ECO:0000269" key="2">
    <source>
    </source>
</evidence>
<evidence type="ECO:0000303" key="3">
    <source>
    </source>
</evidence>
<evidence type="ECO:0000305" key="4"/>
<evidence type="ECO:0000312" key="5">
    <source>
        <dbReference type="EMBL" id="QCI12141.1"/>
    </source>
</evidence>
<feature type="chain" id="PRO_0000454114" description="Indole-3-acetate monooxygenase">
    <location>
        <begin position="1"/>
        <end position="389"/>
    </location>
</feature>
<reference key="1">
    <citation type="journal article" date="2008" name="FEMS Microbiol. Ecol.">
        <title>Discovery of a bacterial gene cluster for catabolism of the plant hormone indole 3-acetic acid.</title>
        <authorList>
            <person name="Leveau J.H.J."/>
            <person name="Gerards S."/>
        </authorList>
    </citation>
    <scope>NUCLEOTIDE SEQUENCE [GENOMIC DNA]</scope>
    <scope>FUNCTION</scope>
    <source>
        <strain>1290</strain>
    </source>
</reference>
<reference key="2">
    <citation type="submission" date="2019-04" db="EMBL/GenBank/DDBJ databases">
        <title>Genome sequence of Pseudomonas putida 1290, an auxin catabolizing strain.</title>
        <authorList>
            <person name="Laird T.S."/>
            <person name="Leveau J.H.J."/>
        </authorList>
    </citation>
    <scope>NUCLEOTIDE SEQUENCE [LARGE SCALE GENOMIC DNA]</scope>
    <source>
        <strain>1290</strain>
    </source>
</reference>
<reference key="3">
    <citation type="journal article" date="2013" name="J. Chem. Ecol.">
        <title>Functional characterization of the bacterial iac genes for degradation of the plant hormone indole-3-acetic acid.</title>
        <authorList>
            <person name="Scott J.C."/>
            <person name="Greenhut I.V."/>
            <person name="Leveau J.H."/>
        </authorList>
    </citation>
    <scope>FUNCTION</scope>
    <scope>CATALYTIC ACTIVITY</scope>
    <scope>INDUCTION</scope>
    <source>
        <strain>1290</strain>
    </source>
</reference>
<keyword id="KW-0503">Monooxygenase</keyword>
<keyword id="KW-0520">NAD</keyword>
<keyword id="KW-0560">Oxidoreductase</keyword>
<protein>
    <recommendedName>
        <fullName evidence="4">Indole-3-acetate monooxygenase</fullName>
        <ecNumber evidence="2">1.14.13.235</ecNumber>
    </recommendedName>
</protein>
<proteinExistence type="evidence at protein level"/>
<dbReference type="EC" id="1.14.13.235" evidence="2"/>
<dbReference type="EMBL" id="EU360594">
    <property type="protein sequence ID" value="ABY62757.1"/>
    <property type="molecule type" value="Genomic_DNA"/>
</dbReference>
<dbReference type="EMBL" id="CP039371">
    <property type="protein sequence ID" value="QCI12141.1"/>
    <property type="molecule type" value="Genomic_DNA"/>
</dbReference>
<dbReference type="RefSeq" id="WP_136914302.1">
    <property type="nucleotide sequence ID" value="NZ_CP039371.1"/>
</dbReference>
<dbReference type="SMR" id="B0FXI0"/>
<dbReference type="OrthoDB" id="7316074at2"/>
<dbReference type="BioCyc" id="MetaCyc:MONOMER-18108"/>
<dbReference type="BRENDA" id="1.14.13.235">
    <property type="organism ID" value="5092"/>
</dbReference>
<dbReference type="Proteomes" id="UP000298551">
    <property type="component" value="Chromosome"/>
</dbReference>
<dbReference type="GO" id="GO:0003995">
    <property type="term" value="F:acyl-CoA dehydrogenase activity"/>
    <property type="evidence" value="ECO:0007669"/>
    <property type="project" value="TreeGrafter"/>
</dbReference>
<dbReference type="GO" id="GO:0050660">
    <property type="term" value="F:flavin adenine dinucleotide binding"/>
    <property type="evidence" value="ECO:0007669"/>
    <property type="project" value="InterPro"/>
</dbReference>
<dbReference type="GO" id="GO:0004497">
    <property type="term" value="F:monooxygenase activity"/>
    <property type="evidence" value="ECO:0007669"/>
    <property type="project" value="UniProtKB-KW"/>
</dbReference>
<dbReference type="Gene3D" id="1.10.540.10">
    <property type="entry name" value="Acyl-CoA dehydrogenase/oxidase, N-terminal domain"/>
    <property type="match status" value="1"/>
</dbReference>
<dbReference type="Gene3D" id="2.40.110.10">
    <property type="entry name" value="Butyryl-CoA Dehydrogenase, subunit A, domain 2"/>
    <property type="match status" value="1"/>
</dbReference>
<dbReference type="Gene3D" id="1.20.140.10">
    <property type="entry name" value="Butyryl-CoA Dehydrogenase, subunit A, domain 3"/>
    <property type="match status" value="1"/>
</dbReference>
<dbReference type="InterPro" id="IPR013107">
    <property type="entry name" value="Acyl-CoA_DH_C"/>
</dbReference>
<dbReference type="InterPro" id="IPR046373">
    <property type="entry name" value="Acyl-CoA_Oxase/DH_mid-dom_sf"/>
</dbReference>
<dbReference type="InterPro" id="IPR036250">
    <property type="entry name" value="AcylCo_DH-like_C"/>
</dbReference>
<dbReference type="InterPro" id="IPR013786">
    <property type="entry name" value="AcylCoA_DH/ox_N"/>
</dbReference>
<dbReference type="InterPro" id="IPR037069">
    <property type="entry name" value="AcylCoA_DH/ox_N_sf"/>
</dbReference>
<dbReference type="InterPro" id="IPR009100">
    <property type="entry name" value="AcylCoA_DH/oxidase_NM_dom_sf"/>
</dbReference>
<dbReference type="PANTHER" id="PTHR43884">
    <property type="entry name" value="ACYL-COA DEHYDROGENASE"/>
    <property type="match status" value="1"/>
</dbReference>
<dbReference type="PANTHER" id="PTHR43884:SF25">
    <property type="entry name" value="ACYL-COA DEHYDROGENASE YDBM-RELATED"/>
    <property type="match status" value="1"/>
</dbReference>
<dbReference type="Pfam" id="PF08028">
    <property type="entry name" value="Acyl-CoA_dh_2"/>
    <property type="match status" value="1"/>
</dbReference>
<dbReference type="Pfam" id="PF02771">
    <property type="entry name" value="Acyl-CoA_dh_N"/>
    <property type="match status" value="1"/>
</dbReference>
<dbReference type="PIRSF" id="PIRSF016578">
    <property type="entry name" value="HsaA"/>
    <property type="match status" value="1"/>
</dbReference>
<dbReference type="SUPFAM" id="SSF47203">
    <property type="entry name" value="Acyl-CoA dehydrogenase C-terminal domain-like"/>
    <property type="match status" value="1"/>
</dbReference>
<dbReference type="SUPFAM" id="SSF56645">
    <property type="entry name" value="Acyl-CoA dehydrogenase NM domain-like"/>
    <property type="match status" value="1"/>
</dbReference>